<sequence length="78" mass="7871">MEGNITDGLKYVGAGLATLGMIGSALGVGNIFASFLDAAMRNPSAAPQQTGNLFIGMALAEALGIFSVLIAILILFVA</sequence>
<gene>
    <name evidence="1" type="primary">atpE</name>
    <name type="ordered locus">HNE_1920</name>
</gene>
<protein>
    <recommendedName>
        <fullName evidence="1">ATP synthase subunit c</fullName>
    </recommendedName>
    <alternativeName>
        <fullName evidence="1">ATP synthase F(0) sector subunit c</fullName>
    </alternativeName>
    <alternativeName>
        <fullName evidence="1">F-type ATPase subunit c</fullName>
        <shortName evidence="1">F-ATPase subunit c</shortName>
    </alternativeName>
    <alternativeName>
        <fullName evidence="1">Lipid-binding protein</fullName>
    </alternativeName>
</protein>
<comment type="function">
    <text evidence="1">F(1)F(0) ATP synthase produces ATP from ADP in the presence of a proton or sodium gradient. F-type ATPases consist of two structural domains, F(1) containing the extramembraneous catalytic core and F(0) containing the membrane proton channel, linked together by a central stalk and a peripheral stalk. During catalysis, ATP synthesis in the catalytic domain of F(1) is coupled via a rotary mechanism of the central stalk subunits to proton translocation.</text>
</comment>
<comment type="function">
    <text evidence="1">Key component of the F(0) channel; it plays a direct role in translocation across the membrane. A homomeric c-ring of between 10-14 subunits forms the central stalk rotor element with the F(1) delta and epsilon subunits.</text>
</comment>
<comment type="subunit">
    <text evidence="1">F-type ATPases have 2 components, F(1) - the catalytic core - and F(0) - the membrane proton channel. F(1) has five subunits: alpha(3), beta(3), gamma(1), delta(1), epsilon(1). F(0) has three main subunits: a(1), b(2) and c(10-14). The alpha and beta chains form an alternating ring which encloses part of the gamma chain. F(1) is attached to F(0) by a central stalk formed by the gamma and epsilon chains, while a peripheral stalk is formed by the delta and b chains.</text>
</comment>
<comment type="subcellular location">
    <subcellularLocation>
        <location evidence="1">Cell inner membrane</location>
        <topology evidence="1">Multi-pass membrane protein</topology>
    </subcellularLocation>
</comment>
<comment type="similarity">
    <text evidence="1">Belongs to the ATPase C chain family.</text>
</comment>
<reference key="1">
    <citation type="journal article" date="2006" name="J. Bacteriol.">
        <title>Comparative genomic evidence for a close relationship between the dimorphic prosthecate bacteria Hyphomonas neptunium and Caulobacter crescentus.</title>
        <authorList>
            <person name="Badger J.H."/>
            <person name="Hoover T.R."/>
            <person name="Brun Y.V."/>
            <person name="Weiner R.M."/>
            <person name="Laub M.T."/>
            <person name="Alexandre G."/>
            <person name="Mrazek J."/>
            <person name="Ren Q."/>
            <person name="Paulsen I.T."/>
            <person name="Nelson K.E."/>
            <person name="Khouri H.M."/>
            <person name="Radune D."/>
            <person name="Sosa J."/>
            <person name="Dodson R.J."/>
            <person name="Sullivan S.A."/>
            <person name="Rosovitz M.J."/>
            <person name="Madupu R."/>
            <person name="Brinkac L.M."/>
            <person name="Durkin A.S."/>
            <person name="Daugherty S.C."/>
            <person name="Kothari S.P."/>
            <person name="Giglio M.G."/>
            <person name="Zhou L."/>
            <person name="Haft D.H."/>
            <person name="Selengut J.D."/>
            <person name="Davidsen T.M."/>
            <person name="Yang Q."/>
            <person name="Zafar N."/>
            <person name="Ward N.L."/>
        </authorList>
    </citation>
    <scope>NUCLEOTIDE SEQUENCE [LARGE SCALE GENOMIC DNA]</scope>
    <source>
        <strain>ATCC 15444</strain>
    </source>
</reference>
<name>ATPL_HYPNA</name>
<organism>
    <name type="scientific">Hyphomonas neptunium (strain ATCC 15444)</name>
    <dbReference type="NCBI Taxonomy" id="228405"/>
    <lineage>
        <taxon>Bacteria</taxon>
        <taxon>Pseudomonadati</taxon>
        <taxon>Pseudomonadota</taxon>
        <taxon>Alphaproteobacteria</taxon>
        <taxon>Hyphomonadales</taxon>
        <taxon>Hyphomonadaceae</taxon>
        <taxon>Hyphomonas</taxon>
    </lineage>
</organism>
<dbReference type="EMBL" id="CP000158">
    <property type="protein sequence ID" value="ABI77124.1"/>
    <property type="molecule type" value="Genomic_DNA"/>
</dbReference>
<dbReference type="RefSeq" id="WP_011646921.1">
    <property type="nucleotide sequence ID" value="NC_008358.1"/>
</dbReference>
<dbReference type="SMR" id="Q0C0X2"/>
<dbReference type="STRING" id="228405.HNE_1920"/>
<dbReference type="KEGG" id="hne:HNE_1920"/>
<dbReference type="eggNOG" id="COG0636">
    <property type="taxonomic scope" value="Bacteria"/>
</dbReference>
<dbReference type="HOGENOM" id="CLU_148047_4_0_5"/>
<dbReference type="Proteomes" id="UP000001959">
    <property type="component" value="Chromosome"/>
</dbReference>
<dbReference type="GO" id="GO:0005886">
    <property type="term" value="C:plasma membrane"/>
    <property type="evidence" value="ECO:0007669"/>
    <property type="project" value="UniProtKB-SubCell"/>
</dbReference>
<dbReference type="GO" id="GO:0045259">
    <property type="term" value="C:proton-transporting ATP synthase complex"/>
    <property type="evidence" value="ECO:0007669"/>
    <property type="project" value="UniProtKB-KW"/>
</dbReference>
<dbReference type="GO" id="GO:0033177">
    <property type="term" value="C:proton-transporting two-sector ATPase complex, proton-transporting domain"/>
    <property type="evidence" value="ECO:0007669"/>
    <property type="project" value="InterPro"/>
</dbReference>
<dbReference type="GO" id="GO:0008289">
    <property type="term" value="F:lipid binding"/>
    <property type="evidence" value="ECO:0007669"/>
    <property type="project" value="UniProtKB-KW"/>
</dbReference>
<dbReference type="GO" id="GO:0046933">
    <property type="term" value="F:proton-transporting ATP synthase activity, rotational mechanism"/>
    <property type="evidence" value="ECO:0007669"/>
    <property type="project" value="UniProtKB-UniRule"/>
</dbReference>
<dbReference type="CDD" id="cd18182">
    <property type="entry name" value="ATP-synt_Fo_c_ATP5G3"/>
    <property type="match status" value="1"/>
</dbReference>
<dbReference type="Gene3D" id="1.20.20.10">
    <property type="entry name" value="F1F0 ATP synthase subunit C"/>
    <property type="match status" value="1"/>
</dbReference>
<dbReference type="HAMAP" id="MF_01396">
    <property type="entry name" value="ATP_synth_c_bact"/>
    <property type="match status" value="1"/>
</dbReference>
<dbReference type="InterPro" id="IPR000454">
    <property type="entry name" value="ATP_synth_F0_csu"/>
</dbReference>
<dbReference type="InterPro" id="IPR038662">
    <property type="entry name" value="ATP_synth_F0_csu_sf"/>
</dbReference>
<dbReference type="InterPro" id="IPR002379">
    <property type="entry name" value="ATPase_proteolipid_c-like_dom"/>
</dbReference>
<dbReference type="InterPro" id="IPR035921">
    <property type="entry name" value="F/V-ATP_Csub_sf"/>
</dbReference>
<dbReference type="NCBIfam" id="NF005733">
    <property type="entry name" value="PRK07558.1"/>
    <property type="match status" value="1"/>
</dbReference>
<dbReference type="PANTHER" id="PTHR10031">
    <property type="entry name" value="ATP SYNTHASE LIPID-BINDING PROTEIN, MITOCHONDRIAL"/>
    <property type="match status" value="1"/>
</dbReference>
<dbReference type="PANTHER" id="PTHR10031:SF0">
    <property type="entry name" value="ATPASE PROTEIN 9"/>
    <property type="match status" value="1"/>
</dbReference>
<dbReference type="Pfam" id="PF00137">
    <property type="entry name" value="ATP-synt_C"/>
    <property type="match status" value="1"/>
</dbReference>
<dbReference type="PRINTS" id="PR00124">
    <property type="entry name" value="ATPASEC"/>
</dbReference>
<dbReference type="SUPFAM" id="SSF81333">
    <property type="entry name" value="F1F0 ATP synthase subunit C"/>
    <property type="match status" value="1"/>
</dbReference>
<feature type="chain" id="PRO_1000184397" description="ATP synthase subunit c">
    <location>
        <begin position="1"/>
        <end position="78"/>
    </location>
</feature>
<feature type="transmembrane region" description="Helical" evidence="1">
    <location>
        <begin position="16"/>
        <end position="36"/>
    </location>
</feature>
<feature type="transmembrane region" description="Helical" evidence="1">
    <location>
        <begin position="57"/>
        <end position="77"/>
    </location>
</feature>
<feature type="site" description="Reversibly protonated during proton transport" evidence="1">
    <location>
        <position position="61"/>
    </location>
</feature>
<evidence type="ECO:0000255" key="1">
    <source>
        <dbReference type="HAMAP-Rule" id="MF_01396"/>
    </source>
</evidence>
<keyword id="KW-0066">ATP synthesis</keyword>
<keyword id="KW-0997">Cell inner membrane</keyword>
<keyword id="KW-1003">Cell membrane</keyword>
<keyword id="KW-0138">CF(0)</keyword>
<keyword id="KW-0375">Hydrogen ion transport</keyword>
<keyword id="KW-0406">Ion transport</keyword>
<keyword id="KW-0446">Lipid-binding</keyword>
<keyword id="KW-0472">Membrane</keyword>
<keyword id="KW-1185">Reference proteome</keyword>
<keyword id="KW-0812">Transmembrane</keyword>
<keyword id="KW-1133">Transmembrane helix</keyword>
<keyword id="KW-0813">Transport</keyword>
<accession>Q0C0X2</accession>
<proteinExistence type="inferred from homology"/>